<keyword id="KW-0249">Electron transport</keyword>
<keyword id="KW-0349">Heme</keyword>
<keyword id="KW-0408">Iron</keyword>
<keyword id="KW-0472">Membrane</keyword>
<keyword id="KW-0479">Metal-binding</keyword>
<keyword id="KW-1185">Reference proteome</keyword>
<keyword id="KW-1278">Translocase</keyword>
<keyword id="KW-0812">Transmembrane</keyword>
<keyword id="KW-1133">Transmembrane helix</keyword>
<keyword id="KW-0813">Transport</keyword>
<proteinExistence type="inferred from homology"/>
<name>CY561_CAEEL</name>
<gene>
    <name type="ORF">F55H2.5</name>
</gene>
<accession>P34465</accession>
<protein>
    <recommendedName>
        <fullName evidence="5">Putative transmembrane ascorbate-dependent reductase CYB561 homolog</fullName>
        <ecNumber evidence="1">7.2.1.-</ecNumber>
    </recommendedName>
    <alternativeName>
        <fullName>Cytochrome b561</fullName>
        <shortName>Cytochrome b-561</shortName>
    </alternativeName>
</protein>
<comment type="function">
    <text evidence="1">Putative transmembrane reductase that uses ascorbate as an electron donor in the cytoplasm and transfers electrons across membranes to reduce monodehydro-L-ascorbate radical in the lumen of secretory vesicles.</text>
</comment>
<comment type="catalytic activity">
    <reaction evidence="1">
        <text>monodehydro-L-ascorbate radical(out) + L-ascorbate(in) = monodehydro-L-ascorbate radical(in) + L-ascorbate(out)</text>
        <dbReference type="Rhea" id="RHEA:66524"/>
        <dbReference type="ChEBI" id="CHEBI:38290"/>
        <dbReference type="ChEBI" id="CHEBI:59513"/>
    </reaction>
    <physiologicalReaction direction="left-to-right" evidence="1">
        <dbReference type="Rhea" id="RHEA:66525"/>
    </physiologicalReaction>
</comment>
<comment type="cofactor">
    <cofactor evidence="1">
        <name>heme b</name>
        <dbReference type="ChEBI" id="CHEBI:60344"/>
    </cofactor>
    <text evidence="1">Binds 2 heme b groups non-covalently.</text>
</comment>
<comment type="subcellular location">
    <subcellularLocation>
        <location evidence="1">Membrane</location>
        <topology evidence="2">Multi-pass membrane protein</topology>
    </subcellularLocation>
</comment>
<organism>
    <name type="scientific">Caenorhabditis elegans</name>
    <dbReference type="NCBI Taxonomy" id="6239"/>
    <lineage>
        <taxon>Eukaryota</taxon>
        <taxon>Metazoa</taxon>
        <taxon>Ecdysozoa</taxon>
        <taxon>Nematoda</taxon>
        <taxon>Chromadorea</taxon>
        <taxon>Rhabditida</taxon>
        <taxon>Rhabditina</taxon>
        <taxon>Rhabditomorpha</taxon>
        <taxon>Rhabditoidea</taxon>
        <taxon>Rhabditidae</taxon>
        <taxon>Peloderinae</taxon>
        <taxon>Caenorhabditis</taxon>
    </lineage>
</organism>
<evidence type="ECO:0000250" key="1">
    <source>
        <dbReference type="UniProtKB" id="P10897"/>
    </source>
</evidence>
<evidence type="ECO:0000250" key="2">
    <source>
        <dbReference type="UniProtKB" id="Q53TN4"/>
    </source>
</evidence>
<evidence type="ECO:0000255" key="3"/>
<evidence type="ECO:0000255" key="4">
    <source>
        <dbReference type="PROSITE-ProRule" id="PRU00242"/>
    </source>
</evidence>
<evidence type="ECO:0000305" key="5"/>
<dbReference type="EC" id="7.2.1.-" evidence="1"/>
<dbReference type="EMBL" id="Z27080">
    <property type="protein sequence ID" value="CAA81603.1"/>
    <property type="molecule type" value="Genomic_DNA"/>
</dbReference>
<dbReference type="PIR" id="S40988">
    <property type="entry name" value="S40988"/>
</dbReference>
<dbReference type="RefSeq" id="NP_499095.1">
    <property type="nucleotide sequence ID" value="NM_066694.4"/>
</dbReference>
<dbReference type="SMR" id="P34465"/>
<dbReference type="BioGRID" id="51085">
    <property type="interactions" value="1"/>
</dbReference>
<dbReference type="DIP" id="DIP-24624N"/>
<dbReference type="FunCoup" id="P34465">
    <property type="interactions" value="928"/>
</dbReference>
<dbReference type="STRING" id="6239.F55H2.5.1"/>
<dbReference type="PaxDb" id="6239-F55H2.5"/>
<dbReference type="EnsemblMetazoa" id="F55H2.5.1">
    <property type="protein sequence ID" value="F55H2.5.1"/>
    <property type="gene ID" value="WBGene00010131"/>
</dbReference>
<dbReference type="GeneID" id="186343"/>
<dbReference type="KEGG" id="cel:CELE_F55H2.5"/>
<dbReference type="UCSC" id="F55H2.5">
    <property type="organism name" value="c. elegans"/>
</dbReference>
<dbReference type="AGR" id="WB:WBGene00010131"/>
<dbReference type="CTD" id="186343"/>
<dbReference type="WormBase" id="F55H2.5">
    <property type="protein sequence ID" value="CE00212"/>
    <property type="gene ID" value="WBGene00010131"/>
</dbReference>
<dbReference type="eggNOG" id="KOG1619">
    <property type="taxonomic scope" value="Eukaryota"/>
</dbReference>
<dbReference type="GeneTree" id="ENSGT00950000183197"/>
<dbReference type="HOGENOM" id="CLU_069712_1_1_1"/>
<dbReference type="InParanoid" id="P34465"/>
<dbReference type="OMA" id="GYIANLY"/>
<dbReference type="OrthoDB" id="907479at2759"/>
<dbReference type="PhylomeDB" id="P34465"/>
<dbReference type="Reactome" id="R-CEL-917937">
    <property type="pathway name" value="Iron uptake and transport"/>
</dbReference>
<dbReference type="PRO" id="PR:P34465"/>
<dbReference type="Proteomes" id="UP000001940">
    <property type="component" value="Chromosome III"/>
</dbReference>
<dbReference type="Bgee" id="WBGene00010131">
    <property type="expression patterns" value="Expressed in adult organism and 3 other cell types or tissues"/>
</dbReference>
<dbReference type="GO" id="GO:0016020">
    <property type="term" value="C:membrane"/>
    <property type="evidence" value="ECO:0007669"/>
    <property type="project" value="UniProtKB-SubCell"/>
</dbReference>
<dbReference type="GO" id="GO:0046872">
    <property type="term" value="F:metal ion binding"/>
    <property type="evidence" value="ECO:0007669"/>
    <property type="project" value="UniProtKB-KW"/>
</dbReference>
<dbReference type="GO" id="GO:0016491">
    <property type="term" value="F:oxidoreductase activity"/>
    <property type="evidence" value="ECO:0000318"/>
    <property type="project" value="GO_Central"/>
</dbReference>
<dbReference type="GO" id="GO:0140575">
    <property type="term" value="F:transmembrane monodehydroascorbate reductase activity"/>
    <property type="evidence" value="ECO:0000250"/>
    <property type="project" value="UniProtKB"/>
</dbReference>
<dbReference type="GO" id="GO:0140576">
    <property type="term" value="P:ascorbate homeostasis"/>
    <property type="evidence" value="ECO:0000250"/>
    <property type="project" value="UniProtKB"/>
</dbReference>
<dbReference type="FunFam" id="1.20.120.1770:FF:000001">
    <property type="entry name" value="Cytochrome b reductase 1"/>
    <property type="match status" value="1"/>
</dbReference>
<dbReference type="Gene3D" id="1.20.120.1770">
    <property type="match status" value="1"/>
</dbReference>
<dbReference type="InterPro" id="IPR043205">
    <property type="entry name" value="CYB561/CYBRD1-like"/>
</dbReference>
<dbReference type="InterPro" id="IPR006593">
    <property type="entry name" value="Cyt_b561/ferric_Rdtase_TM"/>
</dbReference>
<dbReference type="PANTHER" id="PTHR10106">
    <property type="entry name" value="CYTOCHROME B561-RELATED"/>
    <property type="match status" value="1"/>
</dbReference>
<dbReference type="PANTHER" id="PTHR10106:SF0">
    <property type="entry name" value="LD36721P"/>
    <property type="match status" value="1"/>
</dbReference>
<dbReference type="Pfam" id="PF03188">
    <property type="entry name" value="Cytochrom_B561"/>
    <property type="match status" value="1"/>
</dbReference>
<dbReference type="SMART" id="SM00665">
    <property type="entry name" value="B561"/>
    <property type="match status" value="1"/>
</dbReference>
<dbReference type="PROSITE" id="PS50939">
    <property type="entry name" value="CYTOCHROME_B561"/>
    <property type="match status" value="1"/>
</dbReference>
<reference key="1">
    <citation type="journal article" date="1994" name="Nature">
        <title>2.2 Mb of contiguous nucleotide sequence from chromosome III of C. elegans.</title>
        <authorList>
            <person name="Wilson R."/>
            <person name="Ainscough R."/>
            <person name="Anderson K."/>
            <person name="Baynes C."/>
            <person name="Berks M."/>
            <person name="Bonfield J."/>
            <person name="Burton J."/>
            <person name="Connell M."/>
            <person name="Copsey T."/>
            <person name="Cooper J."/>
            <person name="Coulson A."/>
            <person name="Craxton M."/>
            <person name="Dear S."/>
            <person name="Du Z."/>
            <person name="Durbin R."/>
            <person name="Favello A."/>
            <person name="Fraser A."/>
            <person name="Fulton L."/>
            <person name="Gardner A."/>
            <person name="Green P."/>
            <person name="Hawkins T."/>
            <person name="Hillier L."/>
            <person name="Jier M."/>
            <person name="Johnston L."/>
            <person name="Jones M."/>
            <person name="Kershaw J."/>
            <person name="Kirsten J."/>
            <person name="Laisster N."/>
            <person name="Latreille P."/>
            <person name="Lightning J."/>
            <person name="Lloyd C."/>
            <person name="Mortimore B."/>
            <person name="O'Callaghan M."/>
            <person name="Parsons J."/>
            <person name="Percy C."/>
            <person name="Rifken L."/>
            <person name="Roopra A."/>
            <person name="Saunders D."/>
            <person name="Shownkeen R."/>
            <person name="Sims M."/>
            <person name="Smaldon N."/>
            <person name="Smith A."/>
            <person name="Smith M."/>
            <person name="Sonnhammer E."/>
            <person name="Staden R."/>
            <person name="Sulston J."/>
            <person name="Thierry-Mieg J."/>
            <person name="Thomas K."/>
            <person name="Vaudin M."/>
            <person name="Vaughan K."/>
            <person name="Waterston R."/>
            <person name="Watson A."/>
            <person name="Weinstock L."/>
            <person name="Wilkinson-Sproat J."/>
            <person name="Wohldman P."/>
        </authorList>
    </citation>
    <scope>NUCLEOTIDE SEQUENCE [LARGE SCALE GENOMIC DNA]</scope>
    <source>
        <strain>Bristol N2</strain>
    </source>
</reference>
<reference key="2">
    <citation type="journal article" date="1998" name="Science">
        <title>Genome sequence of the nematode C. elegans: a platform for investigating biology.</title>
        <authorList>
            <consortium name="The C. elegans sequencing consortium"/>
        </authorList>
    </citation>
    <scope>NUCLEOTIDE SEQUENCE [LARGE SCALE GENOMIC DNA]</scope>
    <source>
        <strain>Bristol N2</strain>
    </source>
</reference>
<sequence length="266" mass="30502">MSLLFDPGFVILREDQSVKLFNIILVMSQVFGGLAVLLVTIWMSKFESGFAWNEDPDKEFNYHPTFMIMGMVFLFGEALLVYRVFRNERKKFSKTLHVILHSCVLVFMLMALKAVFDYHNLHKDPSGNPAPIVNLVSLHSWIGLSVVILYFAQYIVGFITYFFPGMPIPIRQLVMPFHQMFGVLIFIFVSITVAMGISERAAWKHTCWTKEGQMCAQQATSSFVGVFTFLYTVCVLLLVLNPRWKRQSLPEEEGLHHLTSSHSMSD</sequence>
<feature type="chain" id="PRO_0000151033" description="Putative transmembrane ascorbate-dependent reductase CYB561 homolog">
    <location>
        <begin position="1"/>
        <end position="266"/>
    </location>
</feature>
<feature type="topological domain" description="Cytoplasmic" evidence="2">
    <location>
        <begin position="1"/>
        <end position="22"/>
    </location>
</feature>
<feature type="transmembrane region" description="Helical" evidence="3">
    <location>
        <begin position="23"/>
        <end position="43"/>
    </location>
</feature>
<feature type="topological domain" description="Vesicular" evidence="2">
    <location>
        <begin position="44"/>
        <end position="61"/>
    </location>
</feature>
<feature type="transmembrane region" description="Helical" evidence="3">
    <location>
        <begin position="62"/>
        <end position="82"/>
    </location>
</feature>
<feature type="topological domain" description="Cytoplasmic" evidence="2">
    <location>
        <begin position="83"/>
        <end position="95"/>
    </location>
</feature>
<feature type="transmembrane region" description="Helical" evidence="3">
    <location>
        <begin position="96"/>
        <end position="116"/>
    </location>
</feature>
<feature type="topological domain" description="Vesicular" evidence="2">
    <location>
        <begin position="117"/>
        <end position="141"/>
    </location>
</feature>
<feature type="transmembrane region" description="Helical" evidence="3">
    <location>
        <begin position="142"/>
        <end position="162"/>
    </location>
</feature>
<feature type="topological domain" description="Cytoplasmic" evidence="2">
    <location>
        <begin position="163"/>
        <end position="176"/>
    </location>
</feature>
<feature type="transmembrane region" description="Helical" evidence="3">
    <location>
        <begin position="177"/>
        <end position="197"/>
    </location>
</feature>
<feature type="topological domain" description="Vesicular" evidence="2">
    <location>
        <begin position="198"/>
        <end position="219"/>
    </location>
</feature>
<feature type="transmembrane region" description="Helical" evidence="3">
    <location>
        <begin position="220"/>
        <end position="240"/>
    </location>
</feature>
<feature type="topological domain" description="Cytoplasmic" evidence="2">
    <location>
        <begin position="241"/>
        <end position="266"/>
    </location>
</feature>
<feature type="domain" description="Cytochrome b561" evidence="4">
    <location>
        <begin position="27"/>
        <end position="240"/>
    </location>
</feature>
<feature type="binding site" description="axial binding residue" evidence="2">
    <location>
        <position position="63"/>
    </location>
    <ligand>
        <name>heme b</name>
        <dbReference type="ChEBI" id="CHEBI:60344"/>
        <label>1</label>
    </ligand>
    <ligandPart>
        <name>Fe</name>
        <dbReference type="ChEBI" id="CHEBI:18248"/>
    </ligandPart>
</feature>
<feature type="binding site" evidence="2">
    <location>
        <position position="83"/>
    </location>
    <ligand>
        <name>heme b</name>
        <dbReference type="ChEBI" id="CHEBI:60344"/>
        <label>2</label>
    </ligand>
</feature>
<feature type="binding site" evidence="2">
    <location>
        <position position="90"/>
    </location>
    <ligand>
        <name>heme b</name>
        <dbReference type="ChEBI" id="CHEBI:60344"/>
        <label>2</label>
    </ligand>
</feature>
<feature type="binding site" evidence="2">
    <location>
        <position position="90"/>
    </location>
    <ligand>
        <name>L-ascorbate</name>
        <dbReference type="ChEBI" id="CHEBI:38290"/>
    </ligand>
</feature>
<feature type="binding site" evidence="2">
    <location>
        <position position="94"/>
    </location>
    <ligand>
        <name>L-ascorbate</name>
        <dbReference type="ChEBI" id="CHEBI:38290"/>
    </ligand>
</feature>
<feature type="binding site" description="axial binding residue" evidence="2">
    <location>
        <position position="97"/>
    </location>
    <ligand>
        <name>heme b</name>
        <dbReference type="ChEBI" id="CHEBI:60344"/>
        <label>2</label>
    </ligand>
    <ligandPart>
        <name>Fe</name>
        <dbReference type="ChEBI" id="CHEBI:18248"/>
    </ligandPart>
</feature>
<feature type="binding site" evidence="2">
    <location>
        <begin position="134"/>
        <end position="137"/>
    </location>
    <ligand>
        <name>heme b</name>
        <dbReference type="ChEBI" id="CHEBI:60344"/>
        <label>1</label>
    </ligand>
</feature>
<feature type="binding site" description="axial binding residue" evidence="2">
    <location>
        <position position="139"/>
    </location>
    <ligand>
        <name>heme b</name>
        <dbReference type="ChEBI" id="CHEBI:60344"/>
        <label>1</label>
    </ligand>
    <ligandPart>
        <name>Fe</name>
        <dbReference type="ChEBI" id="CHEBI:18248"/>
    </ligandPart>
</feature>
<feature type="binding site" evidence="2">
    <location>
        <position position="171"/>
    </location>
    <ligand>
        <name>L-ascorbate</name>
        <dbReference type="ChEBI" id="CHEBI:38290"/>
    </ligand>
</feature>
<feature type="binding site" description="axial binding residue" evidence="2">
    <location>
        <position position="178"/>
    </location>
    <ligand>
        <name>heme b</name>
        <dbReference type="ChEBI" id="CHEBI:60344"/>
        <label>2</label>
    </ligand>
    <ligandPart>
        <name>Fe</name>
        <dbReference type="ChEBI" id="CHEBI:18248"/>
    </ligandPart>
</feature>
<feature type="binding site" evidence="2">
    <location>
        <position position="199"/>
    </location>
    <ligand>
        <name>heme b</name>
        <dbReference type="ChEBI" id="CHEBI:60344"/>
        <label>1</label>
    </ligand>
</feature>
<feature type="binding site" evidence="2">
    <location>
        <position position="245"/>
    </location>
    <ligand>
        <name>heme b</name>
        <dbReference type="ChEBI" id="CHEBI:60344"/>
        <label>2</label>
    </ligand>
</feature>